<evidence type="ECO:0000250" key="1"/>
<evidence type="ECO:0000250" key="2">
    <source>
        <dbReference type="UniProtKB" id="P33205"/>
    </source>
</evidence>
<evidence type="ECO:0000255" key="3"/>
<evidence type="ECO:0000255" key="4">
    <source>
        <dbReference type="PROSITE-ProRule" id="PRU00089"/>
    </source>
</evidence>
<evidence type="ECO:0000256" key="5">
    <source>
        <dbReference type="SAM" id="MobiDB-lite"/>
    </source>
</evidence>
<evidence type="ECO:0000305" key="6"/>
<evidence type="ECO:0000312" key="7">
    <source>
        <dbReference type="EMBL" id="AAH61392.1"/>
    </source>
</evidence>
<evidence type="ECO:0000312" key="8">
    <source>
        <dbReference type="EMBL" id="CAJ81986.1"/>
    </source>
</evidence>
<gene>
    <name evidence="2" type="primary">foxa4</name>
    <name type="ORF">TGas072p11.1</name>
</gene>
<comment type="function">
    <text evidence="1">Transcriptional repressor involved in embryonic nervous system development. Plays a role in the induction and patterning of the anterior-posterior neural axis. Involved in the establishment of floor plate differentiation from neural plate cells during gastrulation. Binds the anf1 promoter sequence to restrict expression of anf1 to the anterior of the neural plate, thereby patterning the forebrain. Can bind to the HNF-3-alpha DNA target sequence. Cooperates with t/bra in a dose-dependent manner to specify dorsal mesoderm formation, including notochord. May be involved in the dorso-ventral patterning of the mesoderm. Binds to DNA via the target sequence 5'-[GA]TAAA[TC]A-3', with 5'-GTAAATA-3' being the preferred binding site (By similarity).</text>
</comment>
<comment type="subcellular location">
    <subcellularLocation>
        <location evidence="3 6">Nucleus</location>
    </subcellularLocation>
</comment>
<name>FOXA4_XENTR</name>
<dbReference type="EMBL" id="CR762190">
    <property type="protein sequence ID" value="CAJ81986.1"/>
    <property type="molecule type" value="mRNA"/>
</dbReference>
<dbReference type="EMBL" id="BC061392">
    <property type="protein sequence ID" value="AAH61392.1"/>
    <property type="molecule type" value="mRNA"/>
</dbReference>
<dbReference type="RefSeq" id="NP_988938.1">
    <property type="nucleotide sequence ID" value="NM_203607.1"/>
</dbReference>
<dbReference type="SMR" id="Q6P839"/>
<dbReference type="STRING" id="8364.ENSXETP00000027770"/>
<dbReference type="PaxDb" id="8364-ENSXETP00000055323"/>
<dbReference type="GeneID" id="394535"/>
<dbReference type="KEGG" id="xtr:394535"/>
<dbReference type="AGR" id="Xenbase:XB-GENE-486455"/>
<dbReference type="CTD" id="394535"/>
<dbReference type="Xenbase" id="XB-GENE-486455">
    <property type="gene designation" value="foxa4"/>
</dbReference>
<dbReference type="eggNOG" id="KOG3563">
    <property type="taxonomic scope" value="Eukaryota"/>
</dbReference>
<dbReference type="HOGENOM" id="CLU_027910_4_0_1"/>
<dbReference type="InParanoid" id="Q6P839"/>
<dbReference type="OMA" id="WIIDLFP"/>
<dbReference type="OrthoDB" id="5954824at2759"/>
<dbReference type="PhylomeDB" id="Q6P839"/>
<dbReference type="Proteomes" id="UP000008143">
    <property type="component" value="Chromosome 4"/>
</dbReference>
<dbReference type="Bgee" id="ENSXETG00000026171">
    <property type="expression patterns" value="Expressed in gastrula and 7 other cell types or tissues"/>
</dbReference>
<dbReference type="GO" id="GO:0005634">
    <property type="term" value="C:nucleus"/>
    <property type="evidence" value="ECO:0007669"/>
    <property type="project" value="UniProtKB-SubCell"/>
</dbReference>
<dbReference type="GO" id="GO:0003700">
    <property type="term" value="F:DNA-binding transcription factor activity"/>
    <property type="evidence" value="ECO:0007669"/>
    <property type="project" value="InterPro"/>
</dbReference>
<dbReference type="GO" id="GO:0019904">
    <property type="term" value="F:protein domain specific binding"/>
    <property type="evidence" value="ECO:0007669"/>
    <property type="project" value="InterPro"/>
</dbReference>
<dbReference type="GO" id="GO:0043565">
    <property type="term" value="F:sequence-specific DNA binding"/>
    <property type="evidence" value="ECO:0000250"/>
    <property type="project" value="UniProtKB"/>
</dbReference>
<dbReference type="GO" id="GO:0030154">
    <property type="term" value="P:cell differentiation"/>
    <property type="evidence" value="ECO:0007669"/>
    <property type="project" value="UniProtKB-KW"/>
</dbReference>
<dbReference type="GO" id="GO:0045892">
    <property type="term" value="P:negative regulation of DNA-templated transcription"/>
    <property type="evidence" value="ECO:0000250"/>
    <property type="project" value="UniProtKB"/>
</dbReference>
<dbReference type="GO" id="GO:0007399">
    <property type="term" value="P:nervous system development"/>
    <property type="evidence" value="ECO:0007669"/>
    <property type="project" value="UniProtKB-KW"/>
</dbReference>
<dbReference type="FunFam" id="1.10.10.10:FF:000042">
    <property type="entry name" value="hepatocyte nuclear factor 3-beta"/>
    <property type="match status" value="1"/>
</dbReference>
<dbReference type="Gene3D" id="1.10.10.10">
    <property type="entry name" value="Winged helix-like DNA-binding domain superfamily/Winged helix DNA-binding domain"/>
    <property type="match status" value="1"/>
</dbReference>
<dbReference type="InterPro" id="IPR013638">
    <property type="entry name" value="Fork-head_N"/>
</dbReference>
<dbReference type="InterPro" id="IPR001766">
    <property type="entry name" value="Fork_head_dom"/>
</dbReference>
<dbReference type="InterPro" id="IPR018533">
    <property type="entry name" value="Forkhead_box_C"/>
</dbReference>
<dbReference type="InterPro" id="IPR050211">
    <property type="entry name" value="FOX_domain-containing"/>
</dbReference>
<dbReference type="InterPro" id="IPR018122">
    <property type="entry name" value="TF_fork_head_CS_1"/>
</dbReference>
<dbReference type="InterPro" id="IPR030456">
    <property type="entry name" value="TF_fork_head_CS_2"/>
</dbReference>
<dbReference type="InterPro" id="IPR036388">
    <property type="entry name" value="WH-like_DNA-bd_sf"/>
</dbReference>
<dbReference type="InterPro" id="IPR036390">
    <property type="entry name" value="WH_DNA-bd_sf"/>
</dbReference>
<dbReference type="PANTHER" id="PTHR11829">
    <property type="entry name" value="FORKHEAD BOX PROTEIN"/>
    <property type="match status" value="1"/>
</dbReference>
<dbReference type="PANTHER" id="PTHR11829:SF400">
    <property type="entry name" value="FORKHEAD BOX PROTEIN A4"/>
    <property type="match status" value="1"/>
</dbReference>
<dbReference type="Pfam" id="PF00250">
    <property type="entry name" value="Forkhead"/>
    <property type="match status" value="1"/>
</dbReference>
<dbReference type="Pfam" id="PF08430">
    <property type="entry name" value="Forkhead_N"/>
    <property type="match status" value="1"/>
</dbReference>
<dbReference type="Pfam" id="PF09354">
    <property type="entry name" value="HNF_C"/>
    <property type="match status" value="1"/>
</dbReference>
<dbReference type="PRINTS" id="PR00053">
    <property type="entry name" value="FORKHEAD"/>
</dbReference>
<dbReference type="SMART" id="SM00339">
    <property type="entry name" value="FH"/>
    <property type="match status" value="1"/>
</dbReference>
<dbReference type="SUPFAM" id="SSF46785">
    <property type="entry name" value="Winged helix' DNA-binding domain"/>
    <property type="match status" value="1"/>
</dbReference>
<dbReference type="PROSITE" id="PS00657">
    <property type="entry name" value="FORK_HEAD_1"/>
    <property type="match status" value="1"/>
</dbReference>
<dbReference type="PROSITE" id="PS00658">
    <property type="entry name" value="FORK_HEAD_2"/>
    <property type="match status" value="1"/>
</dbReference>
<dbReference type="PROSITE" id="PS50039">
    <property type="entry name" value="FORK_HEAD_3"/>
    <property type="match status" value="1"/>
</dbReference>
<organism>
    <name type="scientific">Xenopus tropicalis</name>
    <name type="common">Western clawed frog</name>
    <name type="synonym">Silurana tropicalis</name>
    <dbReference type="NCBI Taxonomy" id="8364"/>
    <lineage>
        <taxon>Eukaryota</taxon>
        <taxon>Metazoa</taxon>
        <taxon>Chordata</taxon>
        <taxon>Craniata</taxon>
        <taxon>Vertebrata</taxon>
        <taxon>Euteleostomi</taxon>
        <taxon>Amphibia</taxon>
        <taxon>Batrachia</taxon>
        <taxon>Anura</taxon>
        <taxon>Pipoidea</taxon>
        <taxon>Pipidae</taxon>
        <taxon>Xenopodinae</taxon>
        <taxon>Xenopus</taxon>
        <taxon>Silurana</taxon>
    </lineage>
</organism>
<accession>Q6P839</accession>
<sequence length="399" mass="44437">MLNRVKLEIKDPMDWNTMYQESEIYSGIHNMNNGLPSNSFLPTDVSTVPTSMPYMSNGLSGPVTSIQGNLGSLGSMTQGMVGSLAPPASTPAYPMGYCQGESEFQRDPRTYRRNYSHAKPPYSYISLITMAIQQAPNKMMTLNEIYQWIIDLFPYYRQNQQRWQNSIRHSLSFNDCFVKVPRSPEKPGKGSYWTLHPESGNMFENGCYLRRQKRFKCERSKSGEREKKVNKPGDENGGSLKETPVGYDDCSSSRSPQAPVNDGGRDSTGSSIHQASGGSPVGLSPTSEQAGTASQLMYPLGLSNDGYLGLVGEDVHLKHDPFSGRHPFSITQLMSSEQDQTYPSKLEMCPTTDHLVHYSNYSSDYHNMASKNGLDMQTSSSTDNGYYANMYSRPILSSL</sequence>
<feature type="chain" id="PRO_0000250437" description="Forkhead box protein A4">
    <location>
        <begin position="1"/>
        <end position="399"/>
    </location>
</feature>
<feature type="DNA-binding region" description="Fork-head" evidence="4">
    <location>
        <begin position="119"/>
        <end position="213"/>
    </location>
</feature>
<feature type="region of interest" description="Disordered" evidence="5">
    <location>
        <begin position="219"/>
        <end position="290"/>
    </location>
</feature>
<feature type="compositionally biased region" description="Basic and acidic residues" evidence="5">
    <location>
        <begin position="219"/>
        <end position="234"/>
    </location>
</feature>
<feature type="compositionally biased region" description="Polar residues" evidence="5">
    <location>
        <begin position="267"/>
        <end position="277"/>
    </location>
</feature>
<reference evidence="8" key="1">
    <citation type="submission" date="2006-06" db="EMBL/GenBank/DDBJ databases">
        <authorList>
            <consortium name="Sanger Xenopus tropicalis EST/cDNA project"/>
        </authorList>
    </citation>
    <scope>NUCLEOTIDE SEQUENCE [LARGE SCALE MRNA]</scope>
    <source>
        <tissue evidence="8">Gastrula</tissue>
    </source>
</reference>
<reference evidence="8" key="2">
    <citation type="submission" date="2003-11" db="EMBL/GenBank/DDBJ databases">
        <authorList>
            <consortium name="NIH - Xenopus Gene Collection (XGC) project"/>
        </authorList>
    </citation>
    <scope>NUCLEOTIDE SEQUENCE [LARGE SCALE MRNA]</scope>
    <source>
        <tissue evidence="7">Neurula</tissue>
    </source>
</reference>
<proteinExistence type="evidence at transcript level"/>
<protein>
    <recommendedName>
        <fullName>Forkhead box protein A4</fullName>
        <shortName>FoxA4</shortName>
    </recommendedName>
</protein>
<keyword id="KW-0217">Developmental protein</keyword>
<keyword id="KW-0221">Differentiation</keyword>
<keyword id="KW-0238">DNA-binding</keyword>
<keyword id="KW-0524">Neurogenesis</keyword>
<keyword id="KW-0539">Nucleus</keyword>
<keyword id="KW-1185">Reference proteome</keyword>
<keyword id="KW-0678">Repressor</keyword>
<keyword id="KW-0804">Transcription</keyword>
<keyword id="KW-0805">Transcription regulation</keyword>